<evidence type="ECO:0000250" key="1">
    <source>
        <dbReference type="UniProtKB" id="Q4WAW6"/>
    </source>
</evidence>
<evidence type="ECO:0000255" key="2">
    <source>
        <dbReference type="PROSITE-ProRule" id="PRU01020"/>
    </source>
</evidence>
<evidence type="ECO:0000269" key="3">
    <source>
    </source>
</evidence>
<evidence type="ECO:0000303" key="4">
    <source>
    </source>
</evidence>
<keyword id="KW-0489">Methyltransferase</keyword>
<keyword id="KW-0949">S-adenosyl-L-methionine</keyword>
<keyword id="KW-0808">Transferase</keyword>
<organism>
    <name type="scientific">Cladobotryum sp</name>
    <dbReference type="NCBI Taxonomy" id="2040732"/>
    <lineage>
        <taxon>Eukaryota</taxon>
        <taxon>Fungi</taxon>
        <taxon>Dikarya</taxon>
        <taxon>Ascomycota</taxon>
        <taxon>Pezizomycotina</taxon>
        <taxon>Sordariomycetes</taxon>
        <taxon>Hypocreomycetidae</taxon>
        <taxon>Hypocreales</taxon>
        <taxon>Hypocreaceae</taxon>
        <taxon>Cladobotryum</taxon>
    </lineage>
</organism>
<sequence>MSTIRGTLSELSRAADAFAHEVDEAGYGDYTFLPDNSPFDLSFLTSKGLEARGSLIAAAEKILRLAKGPQGCLASFADTKGIEMGTIQALTQLEVPDKVPLQGSITYEELAGVIRVAPELLQRLVRLAALAGFLIEDESGAVRHTAMSAVFLRDTAAGDTARFLFDVDMRAYSFFADSLRLDPSGQNIGDGPTALAFQHDSDDQGNRPTIWDILERNPIQRARFHSTMQALGSFPSHLLKHILVAHDWHSIGSLVDVGGSLGHASLVIAENFPEIRITVQDLPDVVERGRSSLPTVPHAERVSFQAHDLFQEQAIIADAYFLRQILHDWPDGDAERIVRCLIPAMRPGAKLLIMDIVVPEPGAISPYMEKYLRTYDVSMFSMFSAKERTVQQLRDLVERCSARLQFQGISCPPGSATSLLSWVYSAE</sequence>
<reference key="1">
    <citation type="journal article" date="2021" name="J. Am. Chem. Soc.">
        <title>Biosynthesis of the Immunosuppressant (-)-FR901483.</title>
        <authorList>
            <person name="Zhang Z."/>
            <person name="Tamura Y."/>
            <person name="Tang M."/>
            <person name="Qiao T."/>
            <person name="Sato M."/>
            <person name="Otsu Y."/>
            <person name="Sasamura S."/>
            <person name="Taniguchi M."/>
            <person name="Watanabe K."/>
            <person name="Tang Y."/>
        </authorList>
    </citation>
    <scope>NUCLEOTIDE SEQUENCE [GENOMIC DNA]</scope>
    <scope>FUNCTION</scope>
    <scope>CATALYTIC ACTIVITY</scope>
    <scope>PATHWAY</scope>
    <source>
        <strain>11231</strain>
    </source>
</reference>
<name>FRZF_CLASX</name>
<accession>A0A7T8J1Z8</accession>
<proteinExistence type="evidence at protein level"/>
<feature type="chain" id="PRO_0000462334" description="O-methyltransferase FrzF">
    <location>
        <begin position="1"/>
        <end position="427"/>
    </location>
</feature>
<feature type="active site" description="Proton acceptor" evidence="2">
    <location>
        <position position="327"/>
    </location>
</feature>
<feature type="binding site" evidence="2">
    <location>
        <position position="281"/>
    </location>
    <ligand>
        <name>S-adenosyl-L-methionine</name>
        <dbReference type="ChEBI" id="CHEBI:59789"/>
    </ligand>
</feature>
<dbReference type="EC" id="2.1.1.-" evidence="3"/>
<dbReference type="EMBL" id="MW322046">
    <property type="protein sequence ID" value="QQO98476.1"/>
    <property type="molecule type" value="Genomic_DNA"/>
</dbReference>
<dbReference type="GO" id="GO:0008171">
    <property type="term" value="F:O-methyltransferase activity"/>
    <property type="evidence" value="ECO:0007669"/>
    <property type="project" value="InterPro"/>
</dbReference>
<dbReference type="GO" id="GO:0032259">
    <property type="term" value="P:methylation"/>
    <property type="evidence" value="ECO:0007669"/>
    <property type="project" value="UniProtKB-KW"/>
</dbReference>
<dbReference type="GO" id="GO:0044550">
    <property type="term" value="P:secondary metabolite biosynthetic process"/>
    <property type="evidence" value="ECO:0007669"/>
    <property type="project" value="UniProtKB-ARBA"/>
</dbReference>
<dbReference type="Gene3D" id="3.40.50.150">
    <property type="entry name" value="Vaccinia Virus protein VP39"/>
    <property type="match status" value="1"/>
</dbReference>
<dbReference type="Gene3D" id="1.10.10.10">
    <property type="entry name" value="Winged helix-like DNA-binding domain superfamily/Winged helix DNA-binding domain"/>
    <property type="match status" value="1"/>
</dbReference>
<dbReference type="InterPro" id="IPR016461">
    <property type="entry name" value="COMT-like"/>
</dbReference>
<dbReference type="InterPro" id="IPR001077">
    <property type="entry name" value="O_MeTrfase_dom"/>
</dbReference>
<dbReference type="InterPro" id="IPR029063">
    <property type="entry name" value="SAM-dependent_MTases_sf"/>
</dbReference>
<dbReference type="InterPro" id="IPR036388">
    <property type="entry name" value="WH-like_DNA-bd_sf"/>
</dbReference>
<dbReference type="InterPro" id="IPR036390">
    <property type="entry name" value="WH_DNA-bd_sf"/>
</dbReference>
<dbReference type="PANTHER" id="PTHR43712:SF5">
    <property type="entry name" value="O-METHYLTRANSFERASE ASQN-RELATED"/>
    <property type="match status" value="1"/>
</dbReference>
<dbReference type="PANTHER" id="PTHR43712">
    <property type="entry name" value="PUTATIVE (AFU_ORTHOLOGUE AFUA_4G14580)-RELATED"/>
    <property type="match status" value="1"/>
</dbReference>
<dbReference type="Pfam" id="PF00891">
    <property type="entry name" value="Methyltransf_2"/>
    <property type="match status" value="1"/>
</dbReference>
<dbReference type="SUPFAM" id="SSF53335">
    <property type="entry name" value="S-adenosyl-L-methionine-dependent methyltransferases"/>
    <property type="match status" value="1"/>
</dbReference>
<dbReference type="SUPFAM" id="SSF46785">
    <property type="entry name" value="Winged helix' DNA-binding domain"/>
    <property type="match status" value="1"/>
</dbReference>
<dbReference type="PROSITE" id="PS51683">
    <property type="entry name" value="SAM_OMT_II"/>
    <property type="match status" value="1"/>
</dbReference>
<protein>
    <recommendedName>
        <fullName evidence="4">O-methyltransferase FrzF</fullName>
        <ecNumber evidence="3">2.1.1.-</ecNumber>
    </recommendedName>
    <alternativeName>
        <fullName evidence="4">FR901483 biosynthesis cluster protein F</fullName>
    </alternativeName>
</protein>
<comment type="function">
    <text evidence="3">O-methyltransferase; part of the gene cluster that mediates the biosynthesis of the alkaloid (-)-FR901483, a potent immunosuppressant that shows efficacy in animal models and a probable inhibitor of purine nucleotide biosynthesis by targeting phosphoribosylpyrophosphate amidotransferase (PPAT) (PubMed:33372776). Within the pathway, FrzF methylates the phenolic oxygen at position C4 (PubMed:33372776). The biosynthesis of (-)-FR901483 starts with the condensation of two L-tyrosines to yield (S,S)-dityrosyl-piperazine. This process occurs in 3 steps with the non-canonical nonribosomal peptide synthetase FrzA catalyzing the reduction of L-tyrosine into L-tyrosinal, the spontaneous condensation of 2 L-tyrosinal units, and the subsequent reduction by the NmrA-like family domain-containing oxidoreductase FrzB. The cytochrome P450 monooxygenase FrzC then performs coupling between N10 and C1' to morph the piperazine into a 1,4-diazabicyclo[3.2.1]octane spiro-fused to a 2,5-cyclohexadienone. The dienone portion is further reduced to cyclohexanone by the flavin-dependent reductase FrzD. The methyltranserases (MTs) FrzE and FrzF are then involved in the methylation at the C10' amine and the C4 phenolic oxygen, respectively. The order of the two MTs appear to be interchangeable. Cleavage of the C9-N10' bond by the dioxygenase FrzG then leads to formation of a conjugated iminium. In addition to the oxidation of C9, an additional dehydrogenation between C7 and C8 can occur to give a likely shunt product. The next biosynthetic step is the intramolecular aldol condensation catalyzed by the newly identified aldolase FrzH to yield an aza-tricyclic product with the formation of a C9-C3' bond (PubMed:33372776). The short-chain dehydrogenase/reductase FrzI then produces dephospho-(-)-FR901483 that is phosphorylated at C4'-OH into (-)-FR901483 by the phosphotransferase FrzJ (PubMed:33372776).</text>
</comment>
<comment type="catalytic activity">
    <reaction evidence="3">
        <text>(1S,4S)-4-[(4-hydroxyphenyl)methyl]-2,5-diazaspiro[bicyclo[3.2.1]octane-6,1'-cyclohexan]-4'-one + S-adenosyl-L-methionine = (1S,4S)-4-[(4-methoxyphenyl)methyl]-2,5-diazaspiro[bicyclo[3.2.1]octane-6,1'-cyclohexan]-4'-one + S-adenosyl-L-homocysteine + H(+)</text>
        <dbReference type="Rhea" id="RHEA:83591"/>
        <dbReference type="ChEBI" id="CHEBI:15378"/>
        <dbReference type="ChEBI" id="CHEBI:57856"/>
        <dbReference type="ChEBI" id="CHEBI:59789"/>
        <dbReference type="ChEBI" id="CHEBI:233175"/>
        <dbReference type="ChEBI" id="CHEBI:233177"/>
    </reaction>
    <physiologicalReaction direction="left-to-right" evidence="3">
        <dbReference type="Rhea" id="RHEA:83592"/>
    </physiologicalReaction>
</comment>
<comment type="catalytic activity">
    <reaction evidence="3">
        <text>(1S,4S)-4-[(4-hydroxyphenyl)methyl]-2-methyl-2,5-diazaspiro[bicyclo[3.2.1]octane-6,1'-cyclohexan]-4'-one + S-adenosyl-L-methionine = (1S,4S)-4-[(4-methoxyphenyl)methyl]-2-methyl-2,5-diazaspiro[bicyclo[3.2.1]octane-6,1'-cyclohexan]-4'-one + S-adenosyl-L-homocysteine + H(+)</text>
        <dbReference type="Rhea" id="RHEA:83595"/>
        <dbReference type="ChEBI" id="CHEBI:15378"/>
        <dbReference type="ChEBI" id="CHEBI:57856"/>
        <dbReference type="ChEBI" id="CHEBI:59789"/>
        <dbReference type="ChEBI" id="CHEBI:233176"/>
        <dbReference type="ChEBI" id="CHEBI:233178"/>
    </reaction>
    <physiologicalReaction direction="left-to-right" evidence="3">
        <dbReference type="Rhea" id="RHEA:83596"/>
    </physiologicalReaction>
</comment>
<comment type="pathway">
    <text evidence="3">Secondary metabolite biosynthesis.</text>
</comment>
<comment type="subunit">
    <text evidence="1">Homodimer.</text>
</comment>
<comment type="similarity">
    <text evidence="2">Belongs to the class I-like SAM-binding methyltransferase superfamily. Cation-independent O-methyltransferase family.</text>
</comment>
<gene>
    <name evidence="4" type="primary">FrzF</name>
</gene>